<gene>
    <name evidence="1" type="primary">csrA</name>
    <name type="ordered locus">AB57_1223</name>
</gene>
<organism>
    <name type="scientific">Acinetobacter baumannii (strain AB0057)</name>
    <dbReference type="NCBI Taxonomy" id="480119"/>
    <lineage>
        <taxon>Bacteria</taxon>
        <taxon>Pseudomonadati</taxon>
        <taxon>Pseudomonadota</taxon>
        <taxon>Gammaproteobacteria</taxon>
        <taxon>Moraxellales</taxon>
        <taxon>Moraxellaceae</taxon>
        <taxon>Acinetobacter</taxon>
        <taxon>Acinetobacter calcoaceticus/baumannii complex</taxon>
    </lineage>
</organism>
<comment type="function">
    <text evidence="1">A key translational regulator that binds mRNA to regulate translation initiation and/or mRNA stability. Mediates global changes in gene expression, shifting from rapid growth to stress survival by linking envelope stress, the stringent response and the catabolite repression systems. Usually binds in the 5'-UTR; binding at or near the Shine-Dalgarno sequence prevents ribosome-binding, repressing translation, binding elsewhere in the 5'-UTR can activate translation and/or stabilize the mRNA. Its function is antagonized by small RNA(s).</text>
</comment>
<comment type="subunit">
    <text evidence="1">Homodimer; the beta-strands of each monomer intercalate to form a hydrophobic core, while the alpha-helices form wings that extend away from the core.</text>
</comment>
<comment type="subcellular location">
    <subcellularLocation>
        <location evidence="1">Cytoplasm</location>
    </subcellularLocation>
</comment>
<comment type="similarity">
    <text evidence="1">Belongs to the CsrA/RsmA family.</text>
</comment>
<protein>
    <recommendedName>
        <fullName evidence="1">Translational regulator CsrA</fullName>
    </recommendedName>
    <alternativeName>
        <fullName evidence="1">Carbon storage regulator</fullName>
    </alternativeName>
</protein>
<accession>B7I9N8</accession>
<reference key="1">
    <citation type="journal article" date="2008" name="J. Bacteriol.">
        <title>Comparative genome sequence analysis of multidrug-resistant Acinetobacter baumannii.</title>
        <authorList>
            <person name="Adams M.D."/>
            <person name="Goglin K."/>
            <person name="Molyneaux N."/>
            <person name="Hujer K.M."/>
            <person name="Lavender H."/>
            <person name="Jamison J.J."/>
            <person name="MacDonald I.J."/>
            <person name="Martin K.M."/>
            <person name="Russo T."/>
            <person name="Campagnari A.A."/>
            <person name="Hujer A.M."/>
            <person name="Bonomo R.A."/>
            <person name="Gill S.R."/>
        </authorList>
    </citation>
    <scope>NUCLEOTIDE SEQUENCE [LARGE SCALE GENOMIC DNA]</scope>
    <source>
        <strain>AB0057</strain>
    </source>
</reference>
<proteinExistence type="inferred from homology"/>
<feature type="chain" id="PRO_1000118229" description="Translational regulator CsrA">
    <location>
        <begin position="1"/>
        <end position="84"/>
    </location>
</feature>
<name>CSRA_ACIB5</name>
<evidence type="ECO:0000255" key="1">
    <source>
        <dbReference type="HAMAP-Rule" id="MF_00167"/>
    </source>
</evidence>
<keyword id="KW-0010">Activator</keyword>
<keyword id="KW-0963">Cytoplasm</keyword>
<keyword id="KW-0678">Repressor</keyword>
<keyword id="KW-0694">RNA-binding</keyword>
<keyword id="KW-0810">Translation regulation</keyword>
<sequence>MLILTRRVGETLMIGDQVSVTVLGVKGNQVRIGVNAPKEVSVHREEIYQRIQHERAMHEHLQHLDQDYQVSYEDDNYAQKNFNR</sequence>
<dbReference type="EMBL" id="CP001182">
    <property type="protein sequence ID" value="ACJ40246.1"/>
    <property type="molecule type" value="Genomic_DNA"/>
</dbReference>
<dbReference type="RefSeq" id="WP_000906487.1">
    <property type="nucleotide sequence ID" value="NC_011586.2"/>
</dbReference>
<dbReference type="SMR" id="B7I9N8"/>
<dbReference type="GeneID" id="92893212"/>
<dbReference type="KEGG" id="abn:AB57_1223"/>
<dbReference type="HOGENOM" id="CLU_164837_2_1_6"/>
<dbReference type="PHI-base" id="PHI:11769"/>
<dbReference type="Proteomes" id="UP000007094">
    <property type="component" value="Chromosome"/>
</dbReference>
<dbReference type="GO" id="GO:0005829">
    <property type="term" value="C:cytosol"/>
    <property type="evidence" value="ECO:0007669"/>
    <property type="project" value="TreeGrafter"/>
</dbReference>
<dbReference type="GO" id="GO:0048027">
    <property type="term" value="F:mRNA 5'-UTR binding"/>
    <property type="evidence" value="ECO:0007669"/>
    <property type="project" value="UniProtKB-UniRule"/>
</dbReference>
<dbReference type="GO" id="GO:0006402">
    <property type="term" value="P:mRNA catabolic process"/>
    <property type="evidence" value="ECO:0007669"/>
    <property type="project" value="InterPro"/>
</dbReference>
<dbReference type="GO" id="GO:0045947">
    <property type="term" value="P:negative regulation of translational initiation"/>
    <property type="evidence" value="ECO:0007669"/>
    <property type="project" value="UniProtKB-UniRule"/>
</dbReference>
<dbReference type="GO" id="GO:0045948">
    <property type="term" value="P:positive regulation of translational initiation"/>
    <property type="evidence" value="ECO:0007669"/>
    <property type="project" value="UniProtKB-UniRule"/>
</dbReference>
<dbReference type="GO" id="GO:0006109">
    <property type="term" value="P:regulation of carbohydrate metabolic process"/>
    <property type="evidence" value="ECO:0007669"/>
    <property type="project" value="UniProtKB-UniRule"/>
</dbReference>
<dbReference type="FunFam" id="2.60.40.4380:FF:000001">
    <property type="entry name" value="Translational regulator CsrA"/>
    <property type="match status" value="1"/>
</dbReference>
<dbReference type="Gene3D" id="2.60.40.4380">
    <property type="entry name" value="Translational regulator CsrA"/>
    <property type="match status" value="1"/>
</dbReference>
<dbReference type="HAMAP" id="MF_00167">
    <property type="entry name" value="CsrA"/>
    <property type="match status" value="1"/>
</dbReference>
<dbReference type="InterPro" id="IPR003751">
    <property type="entry name" value="CsrA"/>
</dbReference>
<dbReference type="InterPro" id="IPR036107">
    <property type="entry name" value="CsrA_sf"/>
</dbReference>
<dbReference type="NCBIfam" id="TIGR00202">
    <property type="entry name" value="csrA"/>
    <property type="match status" value="1"/>
</dbReference>
<dbReference type="NCBIfam" id="NF002469">
    <property type="entry name" value="PRK01712.1"/>
    <property type="match status" value="1"/>
</dbReference>
<dbReference type="PANTHER" id="PTHR34984">
    <property type="entry name" value="CARBON STORAGE REGULATOR"/>
    <property type="match status" value="1"/>
</dbReference>
<dbReference type="PANTHER" id="PTHR34984:SF1">
    <property type="entry name" value="CARBON STORAGE REGULATOR"/>
    <property type="match status" value="1"/>
</dbReference>
<dbReference type="Pfam" id="PF02599">
    <property type="entry name" value="CsrA"/>
    <property type="match status" value="1"/>
</dbReference>
<dbReference type="SUPFAM" id="SSF117130">
    <property type="entry name" value="CsrA-like"/>
    <property type="match status" value="1"/>
</dbReference>